<protein>
    <recommendedName>
        <fullName evidence="1">1-(5-phosphoribosyl)-5-[(5-phosphoribosylamino)methylideneamino] imidazole-4-carboxamide isomerase</fullName>
        <ecNumber evidence="1">5.3.1.16</ecNumber>
    </recommendedName>
    <alternativeName>
        <fullName evidence="1">Phosphoribosylformimino-5-aminoimidazole carboxamide ribotide isomerase</fullName>
    </alternativeName>
</protein>
<gene>
    <name evidence="1" type="primary">hisA</name>
    <name type="ordered locus">ECS88_2123</name>
</gene>
<keyword id="KW-0028">Amino-acid biosynthesis</keyword>
<keyword id="KW-0963">Cytoplasm</keyword>
<keyword id="KW-0368">Histidine biosynthesis</keyword>
<keyword id="KW-0413">Isomerase</keyword>
<keyword id="KW-1185">Reference proteome</keyword>
<evidence type="ECO:0000255" key="1">
    <source>
        <dbReference type="HAMAP-Rule" id="MF_01014"/>
    </source>
</evidence>
<accession>B7MDH8</accession>
<sequence length="245" mass="26045">MIIPALDLIDGTVVRLHQGDYGKQRDYGNDPLPRLQDYAAQGAEVLHLVDLTGAKDPAKRQIPLIKTLVAGVNVPVQVGGGVRSEEDVAALLEAGVARVVVGSTAVKSPEMVKGWFERFGADALVLALDVRIDEQGNKQVAVSGWQENSGVSLEQLVETYLPVGLKHVLCTDISRDGTLAGSNVSLYEEVCARYPQVAFQSSGGIGDINDVAALRGTGVRSVIVGRALLEGKFTVKEAIACWQNA</sequence>
<dbReference type="EC" id="5.3.1.16" evidence="1"/>
<dbReference type="EMBL" id="CU928161">
    <property type="protein sequence ID" value="CAR03411.1"/>
    <property type="molecule type" value="Genomic_DNA"/>
</dbReference>
<dbReference type="RefSeq" id="WP_000586452.1">
    <property type="nucleotide sequence ID" value="NC_011742.1"/>
</dbReference>
<dbReference type="SMR" id="B7MDH8"/>
<dbReference type="GeneID" id="75203890"/>
<dbReference type="KEGG" id="ecz:ECS88_2123"/>
<dbReference type="HOGENOM" id="CLU_048577_1_2_6"/>
<dbReference type="UniPathway" id="UPA00031">
    <property type="reaction ID" value="UER00009"/>
</dbReference>
<dbReference type="Proteomes" id="UP000000747">
    <property type="component" value="Chromosome"/>
</dbReference>
<dbReference type="GO" id="GO:0005737">
    <property type="term" value="C:cytoplasm"/>
    <property type="evidence" value="ECO:0007669"/>
    <property type="project" value="UniProtKB-SubCell"/>
</dbReference>
<dbReference type="GO" id="GO:0003949">
    <property type="term" value="F:1-(5-phosphoribosyl)-5-[(5-phosphoribosylamino)methylideneamino]imidazole-4-carboxamide isomerase activity"/>
    <property type="evidence" value="ECO:0007669"/>
    <property type="project" value="UniProtKB-UniRule"/>
</dbReference>
<dbReference type="GO" id="GO:0000105">
    <property type="term" value="P:L-histidine biosynthetic process"/>
    <property type="evidence" value="ECO:0007669"/>
    <property type="project" value="UniProtKB-UniRule"/>
</dbReference>
<dbReference type="GO" id="GO:0000162">
    <property type="term" value="P:L-tryptophan biosynthetic process"/>
    <property type="evidence" value="ECO:0007669"/>
    <property type="project" value="TreeGrafter"/>
</dbReference>
<dbReference type="CDD" id="cd04732">
    <property type="entry name" value="HisA"/>
    <property type="match status" value="1"/>
</dbReference>
<dbReference type="FunFam" id="3.20.20.70:FF:000009">
    <property type="entry name" value="1-(5-phosphoribosyl)-5-[(5-phosphoribosylamino)methylideneamino] imidazole-4-carboxamide isomerase"/>
    <property type="match status" value="1"/>
</dbReference>
<dbReference type="Gene3D" id="3.20.20.70">
    <property type="entry name" value="Aldolase class I"/>
    <property type="match status" value="1"/>
</dbReference>
<dbReference type="HAMAP" id="MF_01014">
    <property type="entry name" value="HisA"/>
    <property type="match status" value="1"/>
</dbReference>
<dbReference type="InterPro" id="IPR013785">
    <property type="entry name" value="Aldolase_TIM"/>
</dbReference>
<dbReference type="InterPro" id="IPR006062">
    <property type="entry name" value="His_biosynth"/>
</dbReference>
<dbReference type="InterPro" id="IPR006063">
    <property type="entry name" value="HisA_bact_arch"/>
</dbReference>
<dbReference type="InterPro" id="IPR044524">
    <property type="entry name" value="Isoase_HisA-like"/>
</dbReference>
<dbReference type="InterPro" id="IPR023016">
    <property type="entry name" value="Isoase_HisA-like_bact"/>
</dbReference>
<dbReference type="InterPro" id="IPR011060">
    <property type="entry name" value="RibuloseP-bd_barrel"/>
</dbReference>
<dbReference type="NCBIfam" id="TIGR00007">
    <property type="entry name" value="1-(5-phosphoribosyl)-5-[(5-phosphoribosylamino)methylideneamino]imidazole-4-carboxamide isomerase"/>
    <property type="match status" value="1"/>
</dbReference>
<dbReference type="PANTHER" id="PTHR43090">
    <property type="entry name" value="1-(5-PHOSPHORIBOSYL)-5-[(5-PHOSPHORIBOSYLAMINO)METHYLIDENEAMINO] IMIDAZOLE-4-CARBOXAMIDE ISOMERASE"/>
    <property type="match status" value="1"/>
</dbReference>
<dbReference type="PANTHER" id="PTHR43090:SF2">
    <property type="entry name" value="1-(5-PHOSPHORIBOSYL)-5-[(5-PHOSPHORIBOSYLAMINO)METHYLIDENEAMINO] IMIDAZOLE-4-CARBOXAMIDE ISOMERASE"/>
    <property type="match status" value="1"/>
</dbReference>
<dbReference type="Pfam" id="PF00977">
    <property type="entry name" value="His_biosynth"/>
    <property type="match status" value="1"/>
</dbReference>
<dbReference type="SUPFAM" id="SSF51366">
    <property type="entry name" value="Ribulose-phoshate binding barrel"/>
    <property type="match status" value="1"/>
</dbReference>
<organism>
    <name type="scientific">Escherichia coli O45:K1 (strain S88 / ExPEC)</name>
    <dbReference type="NCBI Taxonomy" id="585035"/>
    <lineage>
        <taxon>Bacteria</taxon>
        <taxon>Pseudomonadati</taxon>
        <taxon>Pseudomonadota</taxon>
        <taxon>Gammaproteobacteria</taxon>
        <taxon>Enterobacterales</taxon>
        <taxon>Enterobacteriaceae</taxon>
        <taxon>Escherichia</taxon>
    </lineage>
</organism>
<name>HIS4_ECO45</name>
<reference key="1">
    <citation type="journal article" date="2009" name="PLoS Genet.">
        <title>Organised genome dynamics in the Escherichia coli species results in highly diverse adaptive paths.</title>
        <authorList>
            <person name="Touchon M."/>
            <person name="Hoede C."/>
            <person name="Tenaillon O."/>
            <person name="Barbe V."/>
            <person name="Baeriswyl S."/>
            <person name="Bidet P."/>
            <person name="Bingen E."/>
            <person name="Bonacorsi S."/>
            <person name="Bouchier C."/>
            <person name="Bouvet O."/>
            <person name="Calteau A."/>
            <person name="Chiapello H."/>
            <person name="Clermont O."/>
            <person name="Cruveiller S."/>
            <person name="Danchin A."/>
            <person name="Diard M."/>
            <person name="Dossat C."/>
            <person name="Karoui M.E."/>
            <person name="Frapy E."/>
            <person name="Garry L."/>
            <person name="Ghigo J.M."/>
            <person name="Gilles A.M."/>
            <person name="Johnson J."/>
            <person name="Le Bouguenec C."/>
            <person name="Lescat M."/>
            <person name="Mangenot S."/>
            <person name="Martinez-Jehanne V."/>
            <person name="Matic I."/>
            <person name="Nassif X."/>
            <person name="Oztas S."/>
            <person name="Petit M.A."/>
            <person name="Pichon C."/>
            <person name="Rouy Z."/>
            <person name="Ruf C.S."/>
            <person name="Schneider D."/>
            <person name="Tourret J."/>
            <person name="Vacherie B."/>
            <person name="Vallenet D."/>
            <person name="Medigue C."/>
            <person name="Rocha E.P.C."/>
            <person name="Denamur E."/>
        </authorList>
    </citation>
    <scope>NUCLEOTIDE SEQUENCE [LARGE SCALE GENOMIC DNA]</scope>
    <source>
        <strain>S88 / ExPEC</strain>
    </source>
</reference>
<proteinExistence type="inferred from homology"/>
<comment type="catalytic activity">
    <reaction evidence="1">
        <text>1-(5-phospho-beta-D-ribosyl)-5-[(5-phospho-beta-D-ribosylamino)methylideneamino]imidazole-4-carboxamide = 5-[(5-phospho-1-deoxy-D-ribulos-1-ylimino)methylamino]-1-(5-phospho-beta-D-ribosyl)imidazole-4-carboxamide</text>
        <dbReference type="Rhea" id="RHEA:15469"/>
        <dbReference type="ChEBI" id="CHEBI:58435"/>
        <dbReference type="ChEBI" id="CHEBI:58525"/>
        <dbReference type="EC" id="5.3.1.16"/>
    </reaction>
</comment>
<comment type="pathway">
    <text evidence="1">Amino-acid biosynthesis; L-histidine biosynthesis; L-histidine from 5-phospho-alpha-D-ribose 1-diphosphate: step 4/9.</text>
</comment>
<comment type="subcellular location">
    <subcellularLocation>
        <location evidence="1">Cytoplasm</location>
    </subcellularLocation>
</comment>
<comment type="similarity">
    <text evidence="1">Belongs to the HisA/HisF family.</text>
</comment>
<feature type="chain" id="PRO_1000135108" description="1-(5-phosphoribosyl)-5-[(5-phosphoribosylamino)methylideneamino] imidazole-4-carboxamide isomerase">
    <location>
        <begin position="1"/>
        <end position="245"/>
    </location>
</feature>
<feature type="active site" description="Proton acceptor" evidence="1">
    <location>
        <position position="7"/>
    </location>
</feature>
<feature type="active site" description="Proton donor" evidence="1">
    <location>
        <position position="129"/>
    </location>
</feature>